<proteinExistence type="inferred from homology"/>
<gene>
    <name evidence="1" type="primary">rpsP</name>
    <name type="ordered locus">LAR_1087</name>
</gene>
<organism>
    <name type="scientific">Limosilactobacillus reuteri subsp. reuteri (strain JCM 1112)</name>
    <name type="common">Lactobacillus reuteri</name>
    <dbReference type="NCBI Taxonomy" id="557433"/>
    <lineage>
        <taxon>Bacteria</taxon>
        <taxon>Bacillati</taxon>
        <taxon>Bacillota</taxon>
        <taxon>Bacilli</taxon>
        <taxon>Lactobacillales</taxon>
        <taxon>Lactobacillaceae</taxon>
        <taxon>Limosilactobacillus</taxon>
    </lineage>
</organism>
<evidence type="ECO:0000255" key="1">
    <source>
        <dbReference type="HAMAP-Rule" id="MF_00385"/>
    </source>
</evidence>
<evidence type="ECO:0000305" key="2"/>
<feature type="chain" id="PRO_1000196424" description="Small ribosomal subunit protein bS16">
    <location>
        <begin position="1"/>
        <end position="91"/>
    </location>
</feature>
<dbReference type="EMBL" id="AP007281">
    <property type="protein sequence ID" value="BAG25603.1"/>
    <property type="molecule type" value="Genomic_DNA"/>
</dbReference>
<dbReference type="RefSeq" id="WP_003663816.1">
    <property type="nucleotide sequence ID" value="NC_010609.1"/>
</dbReference>
<dbReference type="SMR" id="B2G821"/>
<dbReference type="DNASU" id="5188363"/>
<dbReference type="GeneID" id="77191823"/>
<dbReference type="KEGG" id="lrf:LAR_1087"/>
<dbReference type="HOGENOM" id="CLU_100590_5_0_9"/>
<dbReference type="GO" id="GO:0005737">
    <property type="term" value="C:cytoplasm"/>
    <property type="evidence" value="ECO:0007669"/>
    <property type="project" value="UniProtKB-ARBA"/>
</dbReference>
<dbReference type="GO" id="GO:0015935">
    <property type="term" value="C:small ribosomal subunit"/>
    <property type="evidence" value="ECO:0007669"/>
    <property type="project" value="TreeGrafter"/>
</dbReference>
<dbReference type="GO" id="GO:0003735">
    <property type="term" value="F:structural constituent of ribosome"/>
    <property type="evidence" value="ECO:0007669"/>
    <property type="project" value="InterPro"/>
</dbReference>
<dbReference type="GO" id="GO:0006412">
    <property type="term" value="P:translation"/>
    <property type="evidence" value="ECO:0007669"/>
    <property type="project" value="UniProtKB-UniRule"/>
</dbReference>
<dbReference type="FunFam" id="3.30.1320.10:FF:000002">
    <property type="entry name" value="30S ribosomal protein S16"/>
    <property type="match status" value="1"/>
</dbReference>
<dbReference type="Gene3D" id="3.30.1320.10">
    <property type="match status" value="1"/>
</dbReference>
<dbReference type="HAMAP" id="MF_00385">
    <property type="entry name" value="Ribosomal_bS16"/>
    <property type="match status" value="1"/>
</dbReference>
<dbReference type="InterPro" id="IPR000307">
    <property type="entry name" value="Ribosomal_bS16"/>
</dbReference>
<dbReference type="InterPro" id="IPR023803">
    <property type="entry name" value="Ribosomal_bS16_dom_sf"/>
</dbReference>
<dbReference type="NCBIfam" id="TIGR00002">
    <property type="entry name" value="S16"/>
    <property type="match status" value="1"/>
</dbReference>
<dbReference type="PANTHER" id="PTHR12919">
    <property type="entry name" value="30S RIBOSOMAL PROTEIN S16"/>
    <property type="match status" value="1"/>
</dbReference>
<dbReference type="PANTHER" id="PTHR12919:SF20">
    <property type="entry name" value="SMALL RIBOSOMAL SUBUNIT PROTEIN BS16M"/>
    <property type="match status" value="1"/>
</dbReference>
<dbReference type="Pfam" id="PF00886">
    <property type="entry name" value="Ribosomal_S16"/>
    <property type="match status" value="1"/>
</dbReference>
<dbReference type="SUPFAM" id="SSF54565">
    <property type="entry name" value="Ribosomal protein S16"/>
    <property type="match status" value="1"/>
</dbReference>
<keyword id="KW-0687">Ribonucleoprotein</keyword>
<keyword id="KW-0689">Ribosomal protein</keyword>
<reference key="1">
    <citation type="journal article" date="2008" name="DNA Res.">
        <title>Comparative genome analysis of Lactobacillus reuteri and Lactobacillus fermentum reveal a genomic island for reuterin and cobalamin production.</title>
        <authorList>
            <person name="Morita H."/>
            <person name="Toh H."/>
            <person name="Fukuda S."/>
            <person name="Horikawa H."/>
            <person name="Oshima K."/>
            <person name="Suzuki T."/>
            <person name="Murakami M."/>
            <person name="Hisamatsu S."/>
            <person name="Kato Y."/>
            <person name="Takizawa T."/>
            <person name="Fukuoka H."/>
            <person name="Yoshimura T."/>
            <person name="Itoh K."/>
            <person name="O'Sullivan D.J."/>
            <person name="McKay L.L."/>
            <person name="Ohno H."/>
            <person name="Kikuchi J."/>
            <person name="Masaoka T."/>
            <person name="Hattori M."/>
        </authorList>
    </citation>
    <scope>NUCLEOTIDE SEQUENCE [LARGE SCALE GENOMIC DNA]</scope>
    <source>
        <strain>JCM 1112</strain>
    </source>
</reference>
<protein>
    <recommendedName>
        <fullName evidence="1">Small ribosomal subunit protein bS16</fullName>
    </recommendedName>
    <alternativeName>
        <fullName evidence="2">30S ribosomal protein S16</fullName>
    </alternativeName>
</protein>
<name>RS16_LIMRJ</name>
<accession>B2G821</accession>
<sequence length="91" mass="10449">MSVKIRLKRMGSKKRPFYRIVVADSRAPRDGRFITSVGTYNPLTTPKEVKFDEDAVMEWLQKGAQPSDTVRNMLQAAGVMKKYHEAKYAKK</sequence>
<comment type="similarity">
    <text evidence="1">Belongs to the bacterial ribosomal protein bS16 family.</text>
</comment>